<name>NLT13_PARJU</name>
<dbReference type="EMBL" id="X85012">
    <property type="protein sequence ID" value="CAA59370.1"/>
    <property type="molecule type" value="mRNA"/>
</dbReference>
<dbReference type="PIR" id="S52933">
    <property type="entry name" value="S52933"/>
</dbReference>
<dbReference type="SMR" id="Q40905"/>
<dbReference type="Allergome" id="503">
    <property type="allergen name" value="Par j 1"/>
</dbReference>
<dbReference type="Allergome" id="506">
    <property type="allergen name" value="Par j 1.0201"/>
</dbReference>
<dbReference type="GO" id="GO:0008289">
    <property type="term" value="F:lipid binding"/>
    <property type="evidence" value="ECO:0007669"/>
    <property type="project" value="UniProtKB-KW"/>
</dbReference>
<dbReference type="GO" id="GO:0006869">
    <property type="term" value="P:lipid transport"/>
    <property type="evidence" value="ECO:0007669"/>
    <property type="project" value="InterPro"/>
</dbReference>
<dbReference type="CDD" id="cd01960">
    <property type="entry name" value="nsLTP1"/>
    <property type="match status" value="1"/>
</dbReference>
<dbReference type="Gene3D" id="1.10.110.10">
    <property type="entry name" value="Plant lipid-transfer and hydrophobic proteins"/>
    <property type="match status" value="1"/>
</dbReference>
<dbReference type="InterPro" id="IPR036312">
    <property type="entry name" value="Bifun_inhib/LTP/seed_sf"/>
</dbReference>
<dbReference type="InterPro" id="IPR016140">
    <property type="entry name" value="Bifunc_inhib/LTP/seed_store"/>
</dbReference>
<dbReference type="InterPro" id="IPR000528">
    <property type="entry name" value="Plant_nsLTP"/>
</dbReference>
<dbReference type="PANTHER" id="PTHR33076">
    <property type="entry name" value="NON-SPECIFIC LIPID-TRANSFER PROTEIN 2-RELATED"/>
    <property type="match status" value="1"/>
</dbReference>
<dbReference type="Pfam" id="PF00234">
    <property type="entry name" value="Tryp_alpha_amyl"/>
    <property type="match status" value="1"/>
</dbReference>
<dbReference type="PRINTS" id="PR00382">
    <property type="entry name" value="LIPIDTRNSFER"/>
</dbReference>
<dbReference type="SMART" id="SM00499">
    <property type="entry name" value="AAI"/>
    <property type="match status" value="1"/>
</dbReference>
<dbReference type="SUPFAM" id="SSF47699">
    <property type="entry name" value="Bifunctional inhibitor/lipid-transfer protein/seed storage 2S albumin"/>
    <property type="match status" value="1"/>
</dbReference>
<dbReference type="PROSITE" id="PS00597">
    <property type="entry name" value="PLANT_LTP"/>
    <property type="match status" value="1"/>
</dbReference>
<protein>
    <recommendedName>
        <fullName>Probable non-specific lipid-transfer protein 1</fullName>
        <shortName>LTP</shortName>
    </recommendedName>
    <alternativeName>
        <fullName>Allergen Par j I</fullName>
    </alternativeName>
    <alternativeName>
        <fullName>Major pollen allergen Par j 1.0201</fullName>
    </alternativeName>
    <alternativeName>
        <fullName>Protein P1</fullName>
    </alternativeName>
    <allergenName>Par j 1.0201</allergenName>
</protein>
<reference key="1">
    <citation type="journal article" date="1997" name="Int. Arch. Allergy Immunol.">
        <title>Isolation and characterization of two cDNA clones coding for isoforms of the Parietaria judaica major allergen Par j 1.0101.</title>
        <authorList>
            <person name="Duro G."/>
            <person name="Colombo P."/>
            <person name="Costa M.A."/>
            <person name="Izzo V."/>
            <person name="Porcasi R."/>
            <person name="di Fiore R."/>
            <person name="Locorotondo G."/>
            <person name="Cocchiara R."/>
            <person name="Geraci D."/>
        </authorList>
    </citation>
    <scope>NUCLEOTIDE SEQUENCE [MRNA]</scope>
    <source>
        <tissue>Pollen</tissue>
    </source>
</reference>
<accession>Q40905</accession>
<evidence type="ECO:0000250" key="1"/>
<evidence type="ECO:0000255" key="2"/>
<evidence type="ECO:0000305" key="3"/>
<sequence>MRTVSARSSVALVVIVAAVLVWTSSASVAPAPAPGSEETCGTVVGALMPCLPFVQGKEKEPSKGCCSGAKRLDGETKTGPQRVHACECIQTAMKTYSDIDGKLVSEVPKHCGIVDSKLPPIDVNMDCKTLGVLHYKGN</sequence>
<keyword id="KW-0020">Allergen</keyword>
<keyword id="KW-1015">Disulfide bond</keyword>
<keyword id="KW-0446">Lipid-binding</keyword>
<keyword id="KW-0732">Signal</keyword>
<keyword id="KW-0813">Transport</keyword>
<feature type="signal peptide" evidence="2">
    <location>
        <begin position="1"/>
        <end position="36"/>
    </location>
</feature>
<feature type="chain" id="PRO_0000018397" description="Probable non-specific lipid-transfer protein 1">
    <location>
        <begin position="37"/>
        <end position="138"/>
    </location>
</feature>
<feature type="disulfide bond" evidence="1">
    <location>
        <begin position="40"/>
        <end position="88"/>
    </location>
</feature>
<feature type="disulfide bond" evidence="1">
    <location>
        <begin position="50"/>
        <end position="65"/>
    </location>
</feature>
<feature type="disulfide bond" evidence="1">
    <location>
        <begin position="66"/>
        <end position="111"/>
    </location>
</feature>
<feature type="disulfide bond" evidence="1">
    <location>
        <begin position="86"/>
        <end position="127"/>
    </location>
</feature>
<comment type="function">
    <text>Plant non-specific lipid-transfer proteins transfer phospholipids as well as galactolipids across membranes. May play a role in wax or cutin deposition in the cell walls of expanding epidermal cells and certain secretory tissues.</text>
</comment>
<comment type="allergen">
    <text>Causes an allergic reaction in human. Binds to IgE and induces histamine release from basophils of Pj-pollen-allergic subjects.</text>
</comment>
<comment type="similarity">
    <text evidence="3">Belongs to the plant LTP family.</text>
</comment>
<organism>
    <name type="scientific">Parietaria judaica</name>
    <name type="common">Pellitory-of-the-wall</name>
    <name type="synonym">Parietaria diffusa</name>
    <dbReference type="NCBI Taxonomy" id="33127"/>
    <lineage>
        <taxon>Eukaryota</taxon>
        <taxon>Viridiplantae</taxon>
        <taxon>Streptophyta</taxon>
        <taxon>Embryophyta</taxon>
        <taxon>Tracheophyta</taxon>
        <taxon>Spermatophyta</taxon>
        <taxon>Magnoliopsida</taxon>
        <taxon>eudicotyledons</taxon>
        <taxon>Gunneridae</taxon>
        <taxon>Pentapetalae</taxon>
        <taxon>rosids</taxon>
        <taxon>fabids</taxon>
        <taxon>Rosales</taxon>
        <taxon>Urticaceae</taxon>
        <taxon>Parietaria</taxon>
    </lineage>
</organism>
<proteinExistence type="evidence at protein level"/>